<protein>
    <recommendedName>
        <fullName evidence="1">Methionine--tRNA ligase</fullName>
        <ecNumber evidence="1">6.1.1.10</ecNumber>
    </recommendedName>
    <alternativeName>
        <fullName evidence="1">Methionyl-tRNA synthetase</fullName>
        <shortName evidence="1">MetRS</shortName>
    </alternativeName>
</protein>
<reference key="1">
    <citation type="journal article" date="2000" name="Proc. Natl. Acad. Sci. U.S.A.">
        <title>Archaeal adaptation to higher temperatures revealed by genomic sequence of Thermoplasma volcanium.</title>
        <authorList>
            <person name="Kawashima T."/>
            <person name="Amano N."/>
            <person name="Koike H."/>
            <person name="Makino S."/>
            <person name="Higuchi S."/>
            <person name="Kawashima-Ohya Y."/>
            <person name="Watanabe K."/>
            <person name="Yamazaki M."/>
            <person name="Kanehori K."/>
            <person name="Kawamoto T."/>
            <person name="Nunoshiba T."/>
            <person name="Yamamoto Y."/>
            <person name="Aramaki H."/>
            <person name="Makino K."/>
            <person name="Suzuki M."/>
        </authorList>
    </citation>
    <scope>NUCLEOTIDE SEQUENCE [LARGE SCALE GENOMIC DNA]</scope>
    <source>
        <strain>ATCC 51530 / DSM 4299 / JCM 9571 / NBRC 15438 / GSS1</strain>
    </source>
</reference>
<accession>Q979B7</accession>
<name>SYM_THEVO</name>
<dbReference type="EC" id="6.1.1.10" evidence="1"/>
<dbReference type="EMBL" id="BA000011">
    <property type="protein sequence ID" value="BAB60386.1"/>
    <property type="molecule type" value="Genomic_DNA"/>
</dbReference>
<dbReference type="RefSeq" id="WP_010917478.1">
    <property type="nucleotide sequence ID" value="NC_002689.2"/>
</dbReference>
<dbReference type="SMR" id="Q979B7"/>
<dbReference type="STRING" id="273116.gene:9382049"/>
<dbReference type="PaxDb" id="273116-14325482"/>
<dbReference type="GeneID" id="1441360"/>
<dbReference type="KEGG" id="tvo:TVG1284612"/>
<dbReference type="eggNOG" id="arCOG00810">
    <property type="taxonomic scope" value="Archaea"/>
</dbReference>
<dbReference type="HOGENOM" id="CLU_009710_1_2_2"/>
<dbReference type="OrthoDB" id="371856at2157"/>
<dbReference type="PhylomeDB" id="Q979B7"/>
<dbReference type="Proteomes" id="UP000001017">
    <property type="component" value="Chromosome"/>
</dbReference>
<dbReference type="GO" id="GO:0005829">
    <property type="term" value="C:cytosol"/>
    <property type="evidence" value="ECO:0007669"/>
    <property type="project" value="TreeGrafter"/>
</dbReference>
<dbReference type="GO" id="GO:0005524">
    <property type="term" value="F:ATP binding"/>
    <property type="evidence" value="ECO:0007669"/>
    <property type="project" value="UniProtKB-UniRule"/>
</dbReference>
<dbReference type="GO" id="GO:0046872">
    <property type="term" value="F:metal ion binding"/>
    <property type="evidence" value="ECO:0007669"/>
    <property type="project" value="UniProtKB-KW"/>
</dbReference>
<dbReference type="GO" id="GO:0004825">
    <property type="term" value="F:methionine-tRNA ligase activity"/>
    <property type="evidence" value="ECO:0007669"/>
    <property type="project" value="UniProtKB-UniRule"/>
</dbReference>
<dbReference type="GO" id="GO:0006431">
    <property type="term" value="P:methionyl-tRNA aminoacylation"/>
    <property type="evidence" value="ECO:0007669"/>
    <property type="project" value="UniProtKB-UniRule"/>
</dbReference>
<dbReference type="CDD" id="cd07957">
    <property type="entry name" value="Anticodon_Ia_Met"/>
    <property type="match status" value="1"/>
</dbReference>
<dbReference type="CDD" id="cd00814">
    <property type="entry name" value="MetRS_core"/>
    <property type="match status" value="1"/>
</dbReference>
<dbReference type="FunFam" id="2.20.28.20:FF:000001">
    <property type="entry name" value="Methionine--tRNA ligase"/>
    <property type="match status" value="1"/>
</dbReference>
<dbReference type="Gene3D" id="3.40.50.620">
    <property type="entry name" value="HUPs"/>
    <property type="match status" value="1"/>
</dbReference>
<dbReference type="Gene3D" id="1.10.730.10">
    <property type="entry name" value="Isoleucyl-tRNA Synthetase, Domain 1"/>
    <property type="match status" value="1"/>
</dbReference>
<dbReference type="Gene3D" id="2.20.28.20">
    <property type="entry name" value="Methionyl-tRNA synthetase, Zn-domain"/>
    <property type="match status" value="1"/>
</dbReference>
<dbReference type="HAMAP" id="MF_00098">
    <property type="entry name" value="Met_tRNA_synth_type1"/>
    <property type="match status" value="1"/>
</dbReference>
<dbReference type="InterPro" id="IPR001412">
    <property type="entry name" value="aa-tRNA-synth_I_CS"/>
</dbReference>
<dbReference type="InterPro" id="IPR041872">
    <property type="entry name" value="Anticodon_Met"/>
</dbReference>
<dbReference type="InterPro" id="IPR023458">
    <property type="entry name" value="Met-tRNA_ligase_1"/>
</dbReference>
<dbReference type="InterPro" id="IPR014758">
    <property type="entry name" value="Met-tRNA_synth"/>
</dbReference>
<dbReference type="InterPro" id="IPR015413">
    <property type="entry name" value="Methionyl/Leucyl_tRNA_Synth"/>
</dbReference>
<dbReference type="InterPro" id="IPR033911">
    <property type="entry name" value="MetRS_core"/>
</dbReference>
<dbReference type="InterPro" id="IPR029038">
    <property type="entry name" value="MetRS_Zn"/>
</dbReference>
<dbReference type="InterPro" id="IPR014729">
    <property type="entry name" value="Rossmann-like_a/b/a_fold"/>
</dbReference>
<dbReference type="InterPro" id="IPR009080">
    <property type="entry name" value="tRNAsynth_Ia_anticodon-bd"/>
</dbReference>
<dbReference type="NCBIfam" id="TIGR00398">
    <property type="entry name" value="metG"/>
    <property type="match status" value="1"/>
</dbReference>
<dbReference type="NCBIfam" id="NF001100">
    <property type="entry name" value="PRK00133.1"/>
    <property type="match status" value="1"/>
</dbReference>
<dbReference type="PANTHER" id="PTHR45765">
    <property type="entry name" value="METHIONINE--TRNA LIGASE"/>
    <property type="match status" value="1"/>
</dbReference>
<dbReference type="PANTHER" id="PTHR45765:SF1">
    <property type="entry name" value="METHIONINE--TRNA LIGASE, CYTOPLASMIC"/>
    <property type="match status" value="1"/>
</dbReference>
<dbReference type="Pfam" id="PF19303">
    <property type="entry name" value="Anticodon_3"/>
    <property type="match status" value="1"/>
</dbReference>
<dbReference type="Pfam" id="PF09334">
    <property type="entry name" value="tRNA-synt_1g"/>
    <property type="match status" value="1"/>
</dbReference>
<dbReference type="PRINTS" id="PR01041">
    <property type="entry name" value="TRNASYNTHMET"/>
</dbReference>
<dbReference type="SUPFAM" id="SSF47323">
    <property type="entry name" value="Anticodon-binding domain of a subclass of class I aminoacyl-tRNA synthetases"/>
    <property type="match status" value="1"/>
</dbReference>
<dbReference type="SUPFAM" id="SSF57770">
    <property type="entry name" value="Methionyl-tRNA synthetase (MetRS), Zn-domain"/>
    <property type="match status" value="1"/>
</dbReference>
<dbReference type="SUPFAM" id="SSF52374">
    <property type="entry name" value="Nucleotidylyl transferase"/>
    <property type="match status" value="1"/>
</dbReference>
<dbReference type="PROSITE" id="PS00178">
    <property type="entry name" value="AA_TRNA_LIGASE_I"/>
    <property type="match status" value="1"/>
</dbReference>
<feature type="chain" id="PRO_0000139203" description="Methionine--tRNA ligase">
    <location>
        <begin position="1"/>
        <end position="543"/>
    </location>
</feature>
<feature type="short sequence motif" description="'HIGH' region">
    <location>
        <begin position="13"/>
        <end position="23"/>
    </location>
</feature>
<feature type="short sequence motif" description="'KMSKS' region">
    <location>
        <begin position="334"/>
        <end position="338"/>
    </location>
</feature>
<feature type="binding site" evidence="1">
    <location>
        <position position="145"/>
    </location>
    <ligand>
        <name>Zn(2+)</name>
        <dbReference type="ChEBI" id="CHEBI:29105"/>
    </ligand>
</feature>
<feature type="binding site" evidence="1">
    <location>
        <position position="148"/>
    </location>
    <ligand>
        <name>Zn(2+)</name>
        <dbReference type="ChEBI" id="CHEBI:29105"/>
    </ligand>
</feature>
<feature type="binding site" evidence="1">
    <location>
        <position position="158"/>
    </location>
    <ligand>
        <name>Zn(2+)</name>
        <dbReference type="ChEBI" id="CHEBI:29105"/>
    </ligand>
</feature>
<feature type="binding site" evidence="1">
    <location>
        <position position="161"/>
    </location>
    <ligand>
        <name>Zn(2+)</name>
        <dbReference type="ChEBI" id="CHEBI:29105"/>
    </ligand>
</feature>
<feature type="binding site" evidence="1">
    <location>
        <position position="337"/>
    </location>
    <ligand>
        <name>ATP</name>
        <dbReference type="ChEBI" id="CHEBI:30616"/>
    </ligand>
</feature>
<comment type="function">
    <text evidence="1">Is required not only for elongation of protein synthesis but also for the initiation of all mRNA translation through initiator tRNA(fMet) aminoacylation.</text>
</comment>
<comment type="catalytic activity">
    <reaction evidence="1">
        <text>tRNA(Met) + L-methionine + ATP = L-methionyl-tRNA(Met) + AMP + diphosphate</text>
        <dbReference type="Rhea" id="RHEA:13481"/>
        <dbReference type="Rhea" id="RHEA-COMP:9667"/>
        <dbReference type="Rhea" id="RHEA-COMP:9698"/>
        <dbReference type="ChEBI" id="CHEBI:30616"/>
        <dbReference type="ChEBI" id="CHEBI:33019"/>
        <dbReference type="ChEBI" id="CHEBI:57844"/>
        <dbReference type="ChEBI" id="CHEBI:78442"/>
        <dbReference type="ChEBI" id="CHEBI:78530"/>
        <dbReference type="ChEBI" id="CHEBI:456215"/>
        <dbReference type="EC" id="6.1.1.10"/>
    </reaction>
</comment>
<comment type="cofactor">
    <cofactor evidence="1">
        <name>Zn(2+)</name>
        <dbReference type="ChEBI" id="CHEBI:29105"/>
    </cofactor>
    <text evidence="1">Binds 1 zinc ion per subunit.</text>
</comment>
<comment type="subcellular location">
    <subcellularLocation>
        <location evidence="1">Cytoplasm</location>
    </subcellularLocation>
</comment>
<comment type="similarity">
    <text evidence="1">Belongs to the class-I aminoacyl-tRNA synthetase family. MetG type 1 subfamily.</text>
</comment>
<gene>
    <name evidence="1" type="primary">metG</name>
    <name type="ordered locus">TV1244</name>
    <name type="ORF">TVG1284612</name>
</gene>
<evidence type="ECO:0000255" key="1">
    <source>
        <dbReference type="HAMAP-Rule" id="MF_00098"/>
    </source>
</evidence>
<sequence length="543" mass="62931">MIGIKILVNCALPYANGPLHVGHIAGAYLGADVFVRFNRLIGNEVLYVSGSDEYGTPITVRAEKEGKSPQEIADRYYAEHIETFKKLGINFDIFMRTTYPEHSSVAQEFFLKLLNEGVIEKGTMIAPYCRKIGRFMPDRYIEGECPYCGYKKARGDQCDNCGRTLDPQELINPVCILSGETPEFRETEHFFLRLDLFEERLEEWLKTKTFWKPNVLAYTRNFIQGGLKKRAITRDIDWGVKVPLEGYEHKRIYVWFEALIGYITGAKMFSEVIGKPNYWKEFYFDKDVKNYYFIGKDNIPFHSIIWPAMLLGYGELNLPYDIPANEYLTFKGEQFSKSRGIGYTVDELLRVIPPDYLRYYVASILPETGDSDFSLEELVKTVNSDLIDKYGNFVHRTLSFINKYDLKITKPNSLNDEAFEYAQNAFKEYCDELSQVHIKRSLAIWLNLAIYANSYFNKSEPWNLIKTDRDQCNYKLYVSLKLAQYLTAMIYPFTPTSAKAIWEQLGVNMDIDSSFSILNSINDFSVKPSRIPFEKLDIDKLKL</sequence>
<proteinExistence type="inferred from homology"/>
<keyword id="KW-0030">Aminoacyl-tRNA synthetase</keyword>
<keyword id="KW-0067">ATP-binding</keyword>
<keyword id="KW-0963">Cytoplasm</keyword>
<keyword id="KW-0436">Ligase</keyword>
<keyword id="KW-0479">Metal-binding</keyword>
<keyword id="KW-0547">Nucleotide-binding</keyword>
<keyword id="KW-0648">Protein biosynthesis</keyword>
<keyword id="KW-0862">Zinc</keyword>
<organism>
    <name type="scientific">Thermoplasma volcanium (strain ATCC 51530 / DSM 4299 / JCM 9571 / NBRC 15438 / GSS1)</name>
    <dbReference type="NCBI Taxonomy" id="273116"/>
    <lineage>
        <taxon>Archaea</taxon>
        <taxon>Methanobacteriati</taxon>
        <taxon>Thermoplasmatota</taxon>
        <taxon>Thermoplasmata</taxon>
        <taxon>Thermoplasmatales</taxon>
        <taxon>Thermoplasmataceae</taxon>
        <taxon>Thermoplasma</taxon>
    </lineage>
</organism>